<reference key="1">
    <citation type="journal article" date="2007" name="Microbiology">
        <title>Comparative analysis of the Corynebacterium glutamicum group and complete genome sequence of strain R.</title>
        <authorList>
            <person name="Yukawa H."/>
            <person name="Omumasaba C.A."/>
            <person name="Nonaka H."/>
            <person name="Kos P."/>
            <person name="Okai N."/>
            <person name="Suzuki N."/>
            <person name="Suda M."/>
            <person name="Tsuge Y."/>
            <person name="Watanabe J."/>
            <person name="Ikeda Y."/>
            <person name="Vertes A.A."/>
            <person name="Inui M."/>
        </authorList>
    </citation>
    <scope>NUCLEOTIDE SEQUENCE [LARGE SCALE GENOMIC DNA]</scope>
    <source>
        <strain>R</strain>
    </source>
</reference>
<organism>
    <name type="scientific">Corynebacterium glutamicum (strain R)</name>
    <dbReference type="NCBI Taxonomy" id="340322"/>
    <lineage>
        <taxon>Bacteria</taxon>
        <taxon>Bacillati</taxon>
        <taxon>Actinomycetota</taxon>
        <taxon>Actinomycetes</taxon>
        <taxon>Mycobacteriales</taxon>
        <taxon>Corynebacteriaceae</taxon>
        <taxon>Corynebacterium</taxon>
    </lineage>
</organism>
<sequence>MLKNDLSGARVVAVHAHPDDEAITTGGVLADLAARGADVTVITCTLGEQGEVIGETFAQLVNGDADQLGGFRIHELYASLEILGVRGIHLGGAGCWRDSGMVGDPANEHPRAFIHSGDRAVEQLKELLAELKPHLLITYGPDGGYGHPDHIRAHEITHAAAGEQRILWAVSDREELEDGLKAITGLPEGWGRGELSAVDSVDLSVELNDEVYATKVESMRAHATQLWIADGSVSRTNPVAAHAVTQQDNVKVWALSNLIAQPIMRHEHYQLGAGTPLPEGATGVLDGLEF</sequence>
<protein>
    <recommendedName>
        <fullName evidence="1">1D-myo-inositol 2-acetamido-2-deoxy-alpha-D-glucopyranoside deacetylase</fullName>
        <shortName evidence="1">GlcNAc-Ins deacetylase</shortName>
        <ecNumber evidence="1">3.5.1.103</ecNumber>
    </recommendedName>
    <alternativeName>
        <fullName>N-acetyl-1-D-myo-inositol 2-amino-2-deoxy-alpha-D-glucopyranoside deacetylase</fullName>
    </alternativeName>
</protein>
<gene>
    <name evidence="1" type="primary">mshB</name>
    <name type="ordered locus">cgR_1183</name>
</gene>
<feature type="chain" id="PRO_0000400179" description="1D-myo-inositol 2-acetamido-2-deoxy-alpha-D-glucopyranoside deacetylase">
    <location>
        <begin position="1"/>
        <end position="290"/>
    </location>
</feature>
<feature type="binding site" evidence="1">
    <location>
        <position position="17"/>
    </location>
    <ligand>
        <name>Zn(2+)</name>
        <dbReference type="ChEBI" id="CHEBI:29105"/>
    </ligand>
</feature>
<feature type="binding site" evidence="1">
    <location>
        <position position="20"/>
    </location>
    <ligand>
        <name>Zn(2+)</name>
        <dbReference type="ChEBI" id="CHEBI:29105"/>
    </ligand>
</feature>
<feature type="binding site" evidence="1">
    <location>
        <position position="150"/>
    </location>
    <ligand>
        <name>Zn(2+)</name>
        <dbReference type="ChEBI" id="CHEBI:29105"/>
    </ligand>
</feature>
<evidence type="ECO:0000255" key="1">
    <source>
        <dbReference type="HAMAP-Rule" id="MF_01696"/>
    </source>
</evidence>
<keyword id="KW-0378">Hydrolase</keyword>
<keyword id="KW-0479">Metal-binding</keyword>
<keyword id="KW-0862">Zinc</keyword>
<comment type="function">
    <text evidence="1">Catalyzes the deacetylation of 1D-myo-inositol 2-acetamido-2-deoxy-alpha-D-glucopyranoside (GlcNAc-Ins) in the mycothiol biosynthesis pathway.</text>
</comment>
<comment type="catalytic activity">
    <reaction evidence="1">
        <text>1D-myo-inositol 2-acetamido-2-deoxy-alpha-D-glucopyranoside + H2O = 1D-myo-inositol 2-amino-2-deoxy-alpha-D-glucopyranoside + acetate</text>
        <dbReference type="Rhea" id="RHEA:26180"/>
        <dbReference type="ChEBI" id="CHEBI:15377"/>
        <dbReference type="ChEBI" id="CHEBI:30089"/>
        <dbReference type="ChEBI" id="CHEBI:52442"/>
        <dbReference type="ChEBI" id="CHEBI:58886"/>
        <dbReference type="EC" id="3.5.1.103"/>
    </reaction>
</comment>
<comment type="cofactor">
    <cofactor evidence="1">
        <name>Zn(2+)</name>
        <dbReference type="ChEBI" id="CHEBI:29105"/>
    </cofactor>
    <text evidence="1">Binds 1 zinc ion per subunit.</text>
</comment>
<comment type="similarity">
    <text evidence="1">Belongs to the MshB deacetylase family.</text>
</comment>
<dbReference type="EC" id="3.5.1.103" evidence="1"/>
<dbReference type="EMBL" id="AP009044">
    <property type="protein sequence ID" value="BAF54161.1"/>
    <property type="molecule type" value="Genomic_DNA"/>
</dbReference>
<dbReference type="RefSeq" id="WP_003858626.1">
    <property type="nucleotide sequence ID" value="NC_009342.1"/>
</dbReference>
<dbReference type="SMR" id="A4QD64"/>
<dbReference type="GeneID" id="1019085"/>
<dbReference type="KEGG" id="cgt:cgR_1183"/>
<dbReference type="HOGENOM" id="CLU_049311_2_1_11"/>
<dbReference type="PhylomeDB" id="A4QD64"/>
<dbReference type="Proteomes" id="UP000006698">
    <property type="component" value="Chromosome"/>
</dbReference>
<dbReference type="GO" id="GO:0035595">
    <property type="term" value="F:N-acetylglucosaminylinositol deacetylase activity"/>
    <property type="evidence" value="ECO:0007669"/>
    <property type="project" value="UniProtKB-EC"/>
</dbReference>
<dbReference type="GO" id="GO:0008270">
    <property type="term" value="F:zinc ion binding"/>
    <property type="evidence" value="ECO:0007669"/>
    <property type="project" value="UniProtKB-UniRule"/>
</dbReference>
<dbReference type="GO" id="GO:0010125">
    <property type="term" value="P:mycothiol biosynthetic process"/>
    <property type="evidence" value="ECO:0007669"/>
    <property type="project" value="UniProtKB-UniRule"/>
</dbReference>
<dbReference type="Gene3D" id="3.40.50.10320">
    <property type="entry name" value="LmbE-like"/>
    <property type="match status" value="1"/>
</dbReference>
<dbReference type="HAMAP" id="MF_01696">
    <property type="entry name" value="MshB"/>
    <property type="match status" value="1"/>
</dbReference>
<dbReference type="InterPro" id="IPR003737">
    <property type="entry name" value="GlcNAc_PI_deacetylase-related"/>
</dbReference>
<dbReference type="InterPro" id="IPR024078">
    <property type="entry name" value="LmbE-like_dom_sf"/>
</dbReference>
<dbReference type="InterPro" id="IPR017810">
    <property type="entry name" value="Mycothiol_biosynthesis_MshB"/>
</dbReference>
<dbReference type="NCBIfam" id="TIGR03445">
    <property type="entry name" value="mycothiol_MshB"/>
    <property type="match status" value="1"/>
</dbReference>
<dbReference type="PANTHER" id="PTHR12993:SF26">
    <property type="entry name" value="1D-MYO-INOSITOL 2-ACETAMIDO-2-DEOXY-ALPHA-D-GLUCOPYRANOSIDE DEACETYLASE"/>
    <property type="match status" value="1"/>
</dbReference>
<dbReference type="PANTHER" id="PTHR12993">
    <property type="entry name" value="N-ACETYLGLUCOSAMINYL-PHOSPHATIDYLINOSITOL DE-N-ACETYLASE-RELATED"/>
    <property type="match status" value="1"/>
</dbReference>
<dbReference type="Pfam" id="PF02585">
    <property type="entry name" value="PIG-L"/>
    <property type="match status" value="1"/>
</dbReference>
<dbReference type="SUPFAM" id="SSF102588">
    <property type="entry name" value="LmbE-like"/>
    <property type="match status" value="1"/>
</dbReference>
<proteinExistence type="inferred from homology"/>
<name>MSHB_CORGB</name>
<accession>A4QD64</accession>